<keyword id="KW-0443">Lipid metabolism</keyword>
<keyword id="KW-0472">Membrane</keyword>
<keyword id="KW-1185">Reference proteome</keyword>
<keyword id="KW-0808">Transferase</keyword>
<keyword id="KW-0812">Transmembrane</keyword>
<keyword id="KW-1133">Transmembrane helix</keyword>
<proteinExistence type="evidence at transcript level"/>
<dbReference type="EC" id="2.7.8.-"/>
<dbReference type="EMBL" id="AB017071">
    <property type="protein sequence ID" value="BAB02314.1"/>
    <property type="molecule type" value="Genomic_DNA"/>
</dbReference>
<dbReference type="EMBL" id="CP002686">
    <property type="protein sequence ID" value="AEE75731.1"/>
    <property type="molecule type" value="Genomic_DNA"/>
</dbReference>
<dbReference type="EMBL" id="DR288877">
    <property type="status" value="NOT_ANNOTATED_CDS"/>
    <property type="molecule type" value="mRNA"/>
</dbReference>
<dbReference type="EMBL" id="DR378318">
    <property type="status" value="NOT_ANNOTATED_CDS"/>
    <property type="molecule type" value="mRNA"/>
</dbReference>
<dbReference type="RefSeq" id="NP_188204.1">
    <property type="nucleotide sequence ID" value="NM_112453.3"/>
</dbReference>
<dbReference type="STRING" id="3702.Q9LVZ6"/>
<dbReference type="PaxDb" id="3702-AT3G15830.1"/>
<dbReference type="EnsemblPlants" id="AT3G15830.1">
    <property type="protein sequence ID" value="AT3G15830.1"/>
    <property type="gene ID" value="AT3G15830"/>
</dbReference>
<dbReference type="GeneID" id="820826"/>
<dbReference type="Gramene" id="AT3G15830.1">
    <property type="protein sequence ID" value="AT3G15830.1"/>
    <property type="gene ID" value="AT3G15830"/>
</dbReference>
<dbReference type="KEGG" id="ath:AT3G15830"/>
<dbReference type="Araport" id="AT3G15830"/>
<dbReference type="TAIR" id="AT3G15830"/>
<dbReference type="eggNOG" id="ENOG502QRYQ">
    <property type="taxonomic scope" value="Eukaryota"/>
</dbReference>
<dbReference type="HOGENOM" id="CLU_079484_0_0_1"/>
<dbReference type="InParanoid" id="Q9LVZ6"/>
<dbReference type="OMA" id="TILVGMQ"/>
<dbReference type="PhylomeDB" id="Q9LVZ6"/>
<dbReference type="PRO" id="PR:Q9LVZ6"/>
<dbReference type="Proteomes" id="UP000006548">
    <property type="component" value="Chromosome 3"/>
</dbReference>
<dbReference type="ExpressionAtlas" id="Q9LVZ6">
    <property type="expression patterns" value="baseline and differential"/>
</dbReference>
<dbReference type="GO" id="GO:0016020">
    <property type="term" value="C:membrane"/>
    <property type="evidence" value="ECO:0007669"/>
    <property type="project" value="UniProtKB-SubCell"/>
</dbReference>
<dbReference type="GO" id="GO:0004142">
    <property type="term" value="F:diacylglycerol cholinephosphotransferase activity"/>
    <property type="evidence" value="ECO:0000250"/>
    <property type="project" value="UniProtKB"/>
</dbReference>
<dbReference type="GO" id="GO:0046470">
    <property type="term" value="P:phosphatidylcholine metabolic process"/>
    <property type="evidence" value="ECO:0000250"/>
    <property type="project" value="UniProtKB"/>
</dbReference>
<dbReference type="InterPro" id="IPR056361">
    <property type="entry name" value="AtPDCT1_2_TM_dom"/>
</dbReference>
<dbReference type="InterPro" id="IPR055311">
    <property type="entry name" value="PDCT1/2-like"/>
</dbReference>
<dbReference type="PANTHER" id="PTHR34674">
    <property type="entry name" value="PHOSPHATIDYLCHOLINE:DIACYLGLYCEROL CHOLINEPHOSPHOTRANSFERASE 1-RELATED"/>
    <property type="match status" value="1"/>
</dbReference>
<dbReference type="PANTHER" id="PTHR34674:SF1">
    <property type="entry name" value="PHOSPHATIDYLCHOLINE:DIACYLGLYCEROL CHOLINEPHOSPHOTRANSFERASE 1-RELATED"/>
    <property type="match status" value="1"/>
</dbReference>
<dbReference type="Pfam" id="PF24788">
    <property type="entry name" value="AtPDCT1_2"/>
    <property type="match status" value="1"/>
</dbReference>
<feature type="chain" id="PRO_0000425111" description="Phosphatidylcholine:diacylglycerol cholinephosphotransferase 2">
    <location>
        <begin position="1"/>
        <end position="296"/>
    </location>
</feature>
<feature type="transmembrane region" description="Helical" evidence="2">
    <location>
        <begin position="83"/>
        <end position="103"/>
    </location>
</feature>
<feature type="transmembrane region" description="Helical" evidence="2">
    <location>
        <begin position="136"/>
        <end position="156"/>
    </location>
</feature>
<feature type="transmembrane region" description="Helical" evidence="2">
    <location>
        <begin position="165"/>
        <end position="182"/>
    </location>
</feature>
<feature type="transmembrane region" description="Helical" evidence="2">
    <location>
        <begin position="198"/>
        <end position="218"/>
    </location>
</feature>
<feature type="transmembrane region" description="Helical" evidence="2">
    <location>
        <begin position="250"/>
        <end position="270"/>
    </location>
</feature>
<feature type="active site" evidence="1">
    <location>
        <position position="211"/>
    </location>
</feature>
<feature type="active site" evidence="1">
    <location>
        <position position="251"/>
    </location>
</feature>
<feature type="active site" evidence="1">
    <location>
        <position position="255"/>
    </location>
</feature>
<feature type="sequence conflict" description="In Ref. 3; DR288877/DR378318." evidence="3" ref="3">
    <original>S</original>
    <variation>N</variation>
    <location>
        <position position="125"/>
    </location>
</feature>
<feature type="sequence conflict" description="In Ref. 3; DR378318." evidence="3" ref="3">
    <original>V</original>
    <variation>F</variation>
    <location>
        <position position="233"/>
    </location>
</feature>
<feature type="sequence conflict" description="In Ref. 3; DR378318." evidence="3" ref="3">
    <original>E</original>
    <variation>K</variation>
    <location>
        <position position="274"/>
    </location>
</feature>
<evidence type="ECO:0000250" key="1"/>
<evidence type="ECO:0000255" key="2"/>
<evidence type="ECO:0000305" key="3"/>
<protein>
    <recommendedName>
        <fullName>Phosphatidylcholine:diacylglycerol cholinephosphotransferase 2</fullName>
        <shortName>AtPDCT2</shortName>
        <ecNumber>2.7.8.-</ecNumber>
    </recommendedName>
</protein>
<accession>Q9LVZ6</accession>
<gene>
    <name type="ordered locus">At3g15830</name>
    <name type="ORF">MSJ11.23</name>
</gene>
<name>PDCT2_ARATH</name>
<comment type="function">
    <text evidence="1">Functions as a phosphatidylcholine:diacylglycerol cholinephosphotransferase that catalyzes the transfer of the phosphocholine headgroup from phosphatidylcholine (PC) to diacylglycerol, a major reaction for the transfer of 18:1 into phosphatidylcholine for desaturation and also for the reverse transfer of 18:2 and 18:3 into the triacylglycerols synthesis pathway.</text>
</comment>
<comment type="subcellular location">
    <subcellularLocation>
        <location evidence="3">Membrane</location>
        <topology evidence="3">Multi-pass membrane protein</topology>
    </subcellularLocation>
</comment>
<comment type="similarity">
    <text evidence="3">Belongs to the phosphatidylcholine:diacylglycerol cholinephosphotransferase family.</text>
</comment>
<organism>
    <name type="scientific">Arabidopsis thaliana</name>
    <name type="common">Mouse-ear cress</name>
    <dbReference type="NCBI Taxonomy" id="3702"/>
    <lineage>
        <taxon>Eukaryota</taxon>
        <taxon>Viridiplantae</taxon>
        <taxon>Streptophyta</taxon>
        <taxon>Embryophyta</taxon>
        <taxon>Tracheophyta</taxon>
        <taxon>Spermatophyta</taxon>
        <taxon>Magnoliopsida</taxon>
        <taxon>eudicotyledons</taxon>
        <taxon>Gunneridae</taxon>
        <taxon>Pentapetalae</taxon>
        <taxon>rosids</taxon>
        <taxon>malvids</taxon>
        <taxon>Brassicales</taxon>
        <taxon>Brassicaceae</taxon>
        <taxon>Camelineae</taxon>
        <taxon>Arabidopsis</taxon>
    </lineage>
</organism>
<reference key="1">
    <citation type="journal article" date="2000" name="DNA Res.">
        <title>Structural analysis of Arabidopsis thaliana chromosome 3. I. Sequence features of the regions of 4,504,864 bp covered by sixty P1 and TAC clones.</title>
        <authorList>
            <person name="Sato S."/>
            <person name="Nakamura Y."/>
            <person name="Kaneko T."/>
            <person name="Katoh T."/>
            <person name="Asamizu E."/>
            <person name="Tabata S."/>
        </authorList>
    </citation>
    <scope>NUCLEOTIDE SEQUENCE [LARGE SCALE GENOMIC DNA]</scope>
    <source>
        <strain>cv. Columbia</strain>
    </source>
</reference>
<reference key="2">
    <citation type="journal article" date="2017" name="Plant J.">
        <title>Araport11: a complete reannotation of the Arabidopsis thaliana reference genome.</title>
        <authorList>
            <person name="Cheng C.Y."/>
            <person name="Krishnakumar V."/>
            <person name="Chan A.P."/>
            <person name="Thibaud-Nissen F."/>
            <person name="Schobel S."/>
            <person name="Town C.D."/>
        </authorList>
    </citation>
    <scope>GENOME REANNOTATION</scope>
    <source>
        <strain>cv. Columbia</strain>
    </source>
</reference>
<reference key="3">
    <citation type="submission" date="2002-03" db="EMBL/GenBank/DDBJ databases">
        <title>Full-length cDNA from Arabidopsis thaliana.</title>
        <authorList>
            <person name="Brover V.V."/>
            <person name="Troukhan M.E."/>
            <person name="Alexandrov N.A."/>
            <person name="Lu Y.-P."/>
            <person name="Flavell R.B."/>
            <person name="Feldmann K.A."/>
        </authorList>
    </citation>
    <scope>NUCLEOTIDE SEQUENCE [LARGE SCALE MRNA]</scope>
</reference>
<sequence>MSDAVTKTVAPLRRKANPINGKHTNGVTIDGIFDDHNRQIGPINSQMEDIAQKTDDGGGGEWTSKASFMTWTMHDIIYVARHHWIPCLFAAGVMFFTVVEYTFQMTPASSQPFDLGFVATRYLHSILASSPNLNTVLAALNTILVGMQTTYIGCTWAVEGRPRATIAALFMFTCRGILGYSTQLPRPQEFLGSGVDYPVGNVSFFLFYSGHVAGSMIASLDMKRMQRFRLAMVFDILNVLQSIRLLGTRGHYTIDIAVGVGAGILFDSLAGKYEEMSKRHLRNTRCSLISKDSLVT</sequence>